<gene>
    <name type="primary">GSTM2</name>
</gene>
<protein>
    <recommendedName>
        <fullName evidence="7">Glutathione S-transferase 2</fullName>
        <ecNumber evidence="4">2.5.1.18</ecNumber>
    </recommendedName>
    <alternativeName>
        <fullName>GST class-mu</fullName>
    </alternativeName>
    <alternativeName>
        <fullName>GST-CL2</fullName>
    </alternativeName>
    <alternativeName>
        <fullName>GSTM1-1</fullName>
    </alternativeName>
</protein>
<organism>
    <name type="scientific">Gallus gallus</name>
    <name type="common">Chicken</name>
    <dbReference type="NCBI Taxonomy" id="9031"/>
    <lineage>
        <taxon>Eukaryota</taxon>
        <taxon>Metazoa</taxon>
        <taxon>Chordata</taxon>
        <taxon>Craniata</taxon>
        <taxon>Vertebrata</taxon>
        <taxon>Euteleostomi</taxon>
        <taxon>Archelosauria</taxon>
        <taxon>Archosauria</taxon>
        <taxon>Dinosauria</taxon>
        <taxon>Saurischia</taxon>
        <taxon>Theropoda</taxon>
        <taxon>Coelurosauria</taxon>
        <taxon>Aves</taxon>
        <taxon>Neognathae</taxon>
        <taxon>Galloanserae</taxon>
        <taxon>Galliformes</taxon>
        <taxon>Phasianidae</taxon>
        <taxon>Phasianinae</taxon>
        <taxon>Gallus</taxon>
    </lineage>
</organism>
<reference key="1">
    <citation type="journal article" date="1991" name="Biochim. Biophys. Acta">
        <title>Nucleotide sequence of a class mu glutathione S-transferase from chicken liver.</title>
        <authorList>
            <person name="Liu L.-F."/>
            <person name="Tam M.F."/>
        </authorList>
    </citation>
    <scope>NUCLEOTIDE SEQUENCE [MRNA]</scope>
    <source>
        <strain>White leghorn</strain>
        <tissue>Liver</tissue>
    </source>
</reference>
<reference key="2">
    <citation type="journal article" date="1990" name="Biochemistry">
        <title>Characterization of glutathione S-transferases from day-old chick livers.</title>
        <authorList>
            <person name="Chang L.-H."/>
            <person name="Chuang L.-F."/>
            <person name="Tsai C.-P."/>
            <person name="Tu C.-P.D."/>
            <person name="Tam M.F."/>
        </authorList>
    </citation>
    <scope>PROTEIN SEQUENCE OF 2-35</scope>
    <source>
        <tissue>Liver</tissue>
    </source>
</reference>
<reference key="3">
    <citation type="submission" date="1996-03" db="EMBL/GenBank/DDBJ databases">
        <authorList>
            <person name="Liu L.-F."/>
        </authorList>
    </citation>
    <scope>SEQUENCE REVISION TO 130</scope>
</reference>
<reference key="4">
    <citation type="journal article" date="1998" name="J. Mol. Biol.">
        <title>The three-dimensional structure of an avian class-mu glutathione S-transferase, cGSTM1-1 at 1.94-A resolution.</title>
        <authorList>
            <person name="Sun Y.-J."/>
            <person name="Kuan I.-C."/>
            <person name="Tam M.F."/>
            <person name="Hsiao C.-D."/>
        </authorList>
    </citation>
    <scope>X-RAY CRYSTALLOGRAPHY (1.94 ANGSTROMS) IN COMPLEX WITH GLUTATHIONE ANALOG</scope>
</reference>
<reference key="5">
    <citation type="journal article" date="2000" name="J. Mol. Biol.">
        <title>Tyr115, gln165 and trp209 contribute to the 1, 2-epoxy-3-(p-nitrophenoxy)propane-conjugating activity of glutathione S-transferase cGSTM1-1.</title>
        <authorList>
            <person name="Chern M.K."/>
            <person name="Wu T.C."/>
            <person name="Hsieh C.H."/>
            <person name="Chou C.C."/>
            <person name="Liu L.F."/>
            <person name="Kuan I.C."/>
            <person name="Yeh Y.H."/>
            <person name="Hsiao C.D."/>
            <person name="Tam M.F."/>
        </authorList>
    </citation>
    <scope>X-RAY CRYSTALLOGRAPHY (2.8 ANGSTROMS) IN COMPLEX WITH GLUTATHIONE ANALOG</scope>
    <scope>CATALYTIC ACTIVITY</scope>
    <scope>MUTAGENESIS OF ARG-108 AND TRP-210</scope>
    <scope>FUNCTION</scope>
</reference>
<comment type="function">
    <text evidence="3 4">Conjugation of reduced glutathione to a wide number of exogenous and endogenous hydrophobic electrophiles (By similarity) (PubMed:10903867). Participates in the formation of novel hepoxilin regioisomers (By similarity).</text>
</comment>
<comment type="catalytic activity">
    <reaction evidence="4">
        <text>RX + glutathione = an S-substituted glutathione + a halide anion + H(+)</text>
        <dbReference type="Rhea" id="RHEA:16437"/>
        <dbReference type="ChEBI" id="CHEBI:15378"/>
        <dbReference type="ChEBI" id="CHEBI:16042"/>
        <dbReference type="ChEBI" id="CHEBI:17792"/>
        <dbReference type="ChEBI" id="CHEBI:57925"/>
        <dbReference type="ChEBI" id="CHEBI:90779"/>
        <dbReference type="EC" id="2.5.1.18"/>
    </reaction>
    <physiologicalReaction direction="left-to-right" evidence="8">
        <dbReference type="Rhea" id="RHEA:16438"/>
    </physiologicalReaction>
</comment>
<comment type="subunit">
    <text evidence="4 6">Homodimer.</text>
</comment>
<comment type="subcellular location">
    <subcellularLocation>
        <location>Cytoplasm</location>
    </subcellularLocation>
</comment>
<comment type="similarity">
    <text evidence="7">Belongs to the GST superfamily. Mu family.</text>
</comment>
<keyword id="KW-0002">3D-structure</keyword>
<keyword id="KW-0963">Cytoplasm</keyword>
<keyword id="KW-0903">Direct protein sequencing</keyword>
<keyword id="KW-0443">Lipid metabolism</keyword>
<keyword id="KW-1185">Reference proteome</keyword>
<keyword id="KW-0808">Transferase</keyword>
<evidence type="ECO:0000250" key="1"/>
<evidence type="ECO:0000250" key="2">
    <source>
        <dbReference type="UniProtKB" id="P08010"/>
    </source>
</evidence>
<evidence type="ECO:0000250" key="3">
    <source>
        <dbReference type="UniProtKB" id="P28161"/>
    </source>
</evidence>
<evidence type="ECO:0000269" key="4">
    <source>
    </source>
</evidence>
<evidence type="ECO:0000269" key="5">
    <source>
    </source>
</evidence>
<evidence type="ECO:0000269" key="6">
    <source>
    </source>
</evidence>
<evidence type="ECO:0000305" key="7"/>
<evidence type="ECO:0000305" key="8">
    <source>
    </source>
</evidence>
<evidence type="ECO:0000305" key="9">
    <source>
    </source>
</evidence>
<evidence type="ECO:0007829" key="10">
    <source>
        <dbReference type="PDB" id="1C72"/>
    </source>
</evidence>
<evidence type="ECO:0007829" key="11">
    <source>
        <dbReference type="PDB" id="1GSU"/>
    </source>
</evidence>
<dbReference type="EC" id="2.5.1.18" evidence="4"/>
<dbReference type="EMBL" id="X58248">
    <property type="protein sequence ID" value="CAA41202.1"/>
    <property type="molecule type" value="mRNA"/>
</dbReference>
<dbReference type="PIR" id="S18464">
    <property type="entry name" value="S18464"/>
</dbReference>
<dbReference type="RefSeq" id="NP_990421.1">
    <property type="nucleotide sequence ID" value="NM_205090.2"/>
</dbReference>
<dbReference type="PDB" id="1C72">
    <property type="method" value="X-ray"/>
    <property type="resolution" value="2.80 A"/>
    <property type="chains" value="A/B/C/D=2-220"/>
</dbReference>
<dbReference type="PDB" id="1GSU">
    <property type="method" value="X-ray"/>
    <property type="resolution" value="1.94 A"/>
    <property type="chains" value="A/B=2-220"/>
</dbReference>
<dbReference type="PDBsum" id="1C72"/>
<dbReference type="PDBsum" id="1GSU"/>
<dbReference type="SMR" id="P20136"/>
<dbReference type="FunCoup" id="P20136">
    <property type="interactions" value="100"/>
</dbReference>
<dbReference type="STRING" id="9031.ENSGALP00000048878"/>
<dbReference type="GeneID" id="395976"/>
<dbReference type="KEGG" id="gga:395976"/>
<dbReference type="CTD" id="2946"/>
<dbReference type="VEuPathDB" id="HostDB:geneid_395976"/>
<dbReference type="InParanoid" id="P20136"/>
<dbReference type="OMA" id="ADFIMYE"/>
<dbReference type="OrthoDB" id="4951845at2759"/>
<dbReference type="PhylomeDB" id="P20136"/>
<dbReference type="Reactome" id="R-GGA-156590">
    <property type="pathway name" value="Glutathione conjugation"/>
</dbReference>
<dbReference type="Reactome" id="R-GGA-9026762">
    <property type="pathway name" value="Biosynthesis of maresin conjugates in tissue regeneration (MCTR)"/>
</dbReference>
<dbReference type="Reactome" id="R-GGA-9748787">
    <property type="pathway name" value="Azathioprine ADME"/>
</dbReference>
<dbReference type="Reactome" id="R-GGA-9753281">
    <property type="pathway name" value="Paracetamol ADME"/>
</dbReference>
<dbReference type="EvolutionaryTrace" id="P20136"/>
<dbReference type="PRO" id="PR:P20136"/>
<dbReference type="Proteomes" id="UP000000539">
    <property type="component" value="Chromosome 26"/>
</dbReference>
<dbReference type="Bgee" id="ENSGALG00000032922">
    <property type="expression patterns" value="Expressed in kidney and 13 other cell types or tissues"/>
</dbReference>
<dbReference type="GO" id="GO:0005737">
    <property type="term" value="C:cytoplasm"/>
    <property type="evidence" value="ECO:0007669"/>
    <property type="project" value="UniProtKB-SubCell"/>
</dbReference>
<dbReference type="GO" id="GO:0004364">
    <property type="term" value="F:glutathione transferase activity"/>
    <property type="evidence" value="ECO:0000318"/>
    <property type="project" value="GO_Central"/>
</dbReference>
<dbReference type="GO" id="GO:0042802">
    <property type="term" value="F:identical protein binding"/>
    <property type="evidence" value="ECO:0007669"/>
    <property type="project" value="UniProtKB-ARBA"/>
</dbReference>
<dbReference type="GO" id="GO:0006749">
    <property type="term" value="P:glutathione metabolic process"/>
    <property type="evidence" value="ECO:0000318"/>
    <property type="project" value="GO_Central"/>
</dbReference>
<dbReference type="GO" id="GO:0006629">
    <property type="term" value="P:lipid metabolic process"/>
    <property type="evidence" value="ECO:0007669"/>
    <property type="project" value="UniProtKB-KW"/>
</dbReference>
<dbReference type="CDD" id="cd03209">
    <property type="entry name" value="GST_C_Mu"/>
    <property type="match status" value="1"/>
</dbReference>
<dbReference type="CDD" id="cd03075">
    <property type="entry name" value="GST_N_Mu"/>
    <property type="match status" value="1"/>
</dbReference>
<dbReference type="FunFam" id="1.20.1050.10:FF:000003">
    <property type="entry name" value="Glutathione S-transferase 2"/>
    <property type="match status" value="1"/>
</dbReference>
<dbReference type="FunFam" id="3.40.30.10:FF:000019">
    <property type="entry name" value="Glutathione S-transferase Mu"/>
    <property type="match status" value="1"/>
</dbReference>
<dbReference type="Gene3D" id="1.20.1050.10">
    <property type="match status" value="1"/>
</dbReference>
<dbReference type="Gene3D" id="3.40.30.10">
    <property type="entry name" value="Glutaredoxin"/>
    <property type="match status" value="1"/>
</dbReference>
<dbReference type="InterPro" id="IPR010987">
    <property type="entry name" value="Glutathione-S-Trfase_C-like"/>
</dbReference>
<dbReference type="InterPro" id="IPR036282">
    <property type="entry name" value="Glutathione-S-Trfase_C_sf"/>
</dbReference>
<dbReference type="InterPro" id="IPR040079">
    <property type="entry name" value="Glutathione_S-Trfase"/>
</dbReference>
<dbReference type="InterPro" id="IPR004045">
    <property type="entry name" value="Glutathione_S-Trfase_N"/>
</dbReference>
<dbReference type="InterPro" id="IPR004046">
    <property type="entry name" value="GST_C"/>
</dbReference>
<dbReference type="InterPro" id="IPR003081">
    <property type="entry name" value="GST_mu"/>
</dbReference>
<dbReference type="InterPro" id="IPR050213">
    <property type="entry name" value="GST_superfamily"/>
</dbReference>
<dbReference type="InterPro" id="IPR036249">
    <property type="entry name" value="Thioredoxin-like_sf"/>
</dbReference>
<dbReference type="PANTHER" id="PTHR11571">
    <property type="entry name" value="GLUTATHIONE S-TRANSFERASE"/>
    <property type="match status" value="1"/>
</dbReference>
<dbReference type="PANTHER" id="PTHR11571:SF133">
    <property type="entry name" value="GLUTATHIONE S-TRANSFERASE MU 3"/>
    <property type="match status" value="1"/>
</dbReference>
<dbReference type="Pfam" id="PF00043">
    <property type="entry name" value="GST_C"/>
    <property type="match status" value="1"/>
</dbReference>
<dbReference type="Pfam" id="PF02798">
    <property type="entry name" value="GST_N"/>
    <property type="match status" value="1"/>
</dbReference>
<dbReference type="PRINTS" id="PR01267">
    <property type="entry name" value="GSTRNSFRASEM"/>
</dbReference>
<dbReference type="SFLD" id="SFLDG01205">
    <property type="entry name" value="AMPS.1"/>
    <property type="match status" value="1"/>
</dbReference>
<dbReference type="SFLD" id="SFLDS00019">
    <property type="entry name" value="Glutathione_Transferase_(cytos"/>
    <property type="match status" value="1"/>
</dbReference>
<dbReference type="SUPFAM" id="SSF47616">
    <property type="entry name" value="GST C-terminal domain-like"/>
    <property type="match status" value="1"/>
</dbReference>
<dbReference type="SUPFAM" id="SSF52833">
    <property type="entry name" value="Thioredoxin-like"/>
    <property type="match status" value="1"/>
</dbReference>
<dbReference type="PROSITE" id="PS50405">
    <property type="entry name" value="GST_CTER"/>
    <property type="match status" value="1"/>
</dbReference>
<dbReference type="PROSITE" id="PS50404">
    <property type="entry name" value="GST_NTER"/>
    <property type="match status" value="1"/>
</dbReference>
<sequence>MVVTLGYWDIRGLAHAIRLLLEYTETPYQERRYKAGPAPDFDPSDWTNEKEKLGLDFPNLPYLIDGDVKLTQSNAILRYIARKHNMCGETEVEKQRVDVLENHLMDLRMAFARLCYSPDFEKLKPAYLEQLPGKLRQLSRFLGSRSWFVGDKLTFVDFLAYDVLDQQRMFVPDCPELQGNLSQFLQRFEALEKISAYMRSGRFMKAPIFWYTALWNNKKE</sequence>
<feature type="initiator methionine" description="Removed" evidence="5">
    <location>
        <position position="1"/>
    </location>
</feature>
<feature type="chain" id="PRO_0000185838" description="Glutathione S-transferase 2">
    <location>
        <begin position="2"/>
        <end position="220"/>
    </location>
</feature>
<feature type="domain" description="GST N-terminal">
    <location>
        <begin position="2"/>
        <end position="88"/>
    </location>
</feature>
<feature type="domain" description="GST C-terminal">
    <location>
        <begin position="90"/>
        <end position="208"/>
    </location>
</feature>
<feature type="binding site" evidence="8 9">
    <location>
        <begin position="7"/>
        <end position="8"/>
    </location>
    <ligand>
        <name>glutathione</name>
        <dbReference type="ChEBI" id="CHEBI:57925"/>
    </ligand>
</feature>
<feature type="binding site" evidence="8 9">
    <location>
        <begin position="43"/>
        <end position="46"/>
    </location>
    <ligand>
        <name>glutathione</name>
        <dbReference type="ChEBI" id="CHEBI:57925"/>
    </ligand>
</feature>
<feature type="binding site" evidence="2">
    <location>
        <position position="50"/>
    </location>
    <ligand>
        <name>glutathione</name>
        <dbReference type="ChEBI" id="CHEBI:57925"/>
    </ligand>
</feature>
<feature type="binding site" evidence="8 9">
    <location>
        <begin position="59"/>
        <end position="60"/>
    </location>
    <ligand>
        <name>glutathione</name>
        <dbReference type="ChEBI" id="CHEBI:57925"/>
    </ligand>
</feature>
<feature type="binding site" evidence="8 9">
    <location>
        <begin position="72"/>
        <end position="73"/>
    </location>
    <ligand>
        <name>glutathione</name>
        <dbReference type="ChEBI" id="CHEBI:57925"/>
    </ligand>
</feature>
<feature type="binding site" evidence="1">
    <location>
        <position position="116"/>
    </location>
    <ligand>
        <name>substrate</name>
    </ligand>
</feature>
<feature type="mutagenesis site" description="Reduced affinity for glutathione." evidence="4">
    <original>R</original>
    <variation>E</variation>
    <location>
        <position position="108"/>
    </location>
</feature>
<feature type="mutagenesis site" description="Reduced catalytic activity." evidence="4">
    <original>R</original>
    <variation>L</variation>
    <location>
        <position position="108"/>
    </location>
</feature>
<feature type="mutagenesis site" description="Reduced affinity for glutathione." evidence="4">
    <original>W</original>
    <variation>F</variation>
    <location>
        <position position="210"/>
    </location>
</feature>
<feature type="mutagenesis site" description="Reduced catalytic activity." evidence="4">
    <original>W</original>
    <variation>H</variation>
    <variation>I</variation>
    <variation>P</variation>
    <location>
        <position position="210"/>
    </location>
</feature>
<feature type="strand" evidence="11">
    <location>
        <begin position="3"/>
        <end position="11"/>
    </location>
</feature>
<feature type="helix" evidence="11">
    <location>
        <begin position="12"/>
        <end position="14"/>
    </location>
</feature>
<feature type="helix" evidence="11">
    <location>
        <begin position="15"/>
        <end position="23"/>
    </location>
</feature>
<feature type="strand" evidence="11">
    <location>
        <begin position="28"/>
        <end position="33"/>
    </location>
</feature>
<feature type="turn" evidence="10">
    <location>
        <begin position="38"/>
        <end position="40"/>
    </location>
</feature>
<feature type="helix" evidence="11">
    <location>
        <begin position="44"/>
        <end position="47"/>
    </location>
</feature>
<feature type="helix" evidence="11">
    <location>
        <begin position="50"/>
        <end position="52"/>
    </location>
</feature>
<feature type="strand" evidence="11">
    <location>
        <begin position="60"/>
        <end position="65"/>
    </location>
</feature>
<feature type="strand" evidence="11">
    <location>
        <begin position="68"/>
        <end position="72"/>
    </location>
</feature>
<feature type="helix" evidence="11">
    <location>
        <begin position="73"/>
        <end position="82"/>
    </location>
</feature>
<feature type="turn" evidence="11">
    <location>
        <begin position="83"/>
        <end position="85"/>
    </location>
</feature>
<feature type="helix" evidence="11">
    <location>
        <begin position="91"/>
        <end position="116"/>
    </location>
</feature>
<feature type="helix" evidence="11">
    <location>
        <begin position="120"/>
        <end position="142"/>
    </location>
</feature>
<feature type="strand" evidence="11">
    <location>
        <begin position="146"/>
        <end position="152"/>
    </location>
</feature>
<feature type="helix" evidence="11">
    <location>
        <begin position="155"/>
        <end position="170"/>
    </location>
</feature>
<feature type="helix" evidence="11">
    <location>
        <begin position="175"/>
        <end position="177"/>
    </location>
</feature>
<feature type="helix" evidence="11">
    <location>
        <begin position="180"/>
        <end position="189"/>
    </location>
</feature>
<feature type="helix" evidence="11">
    <location>
        <begin position="192"/>
        <end position="198"/>
    </location>
</feature>
<feature type="strand" evidence="11">
    <location>
        <begin position="200"/>
        <end position="202"/>
    </location>
</feature>
<feature type="strand" evidence="11">
    <location>
        <begin position="214"/>
        <end position="216"/>
    </location>
</feature>
<accession>P20136</accession>
<name>GSTM2_CHICK</name>
<proteinExistence type="evidence at protein level"/>